<evidence type="ECO:0000250" key="1"/>
<evidence type="ECO:0000255" key="2">
    <source>
        <dbReference type="PROSITE-ProRule" id="PRU00040"/>
    </source>
</evidence>
<evidence type="ECO:0000305" key="3"/>
<sequence>MGRFIFLSFGLLVVFLSLSGTGADCPSGWSSYEGHCYNIFHLFKTWAEAERFCRKQVKGAHLVSIESSEEADFVAQLVSENMKRYGIYIWIGLRVRGKKKQCSSQWSDGSSVSYQNWIEAESKTCLGLQKETEFRKWFNIYCGERNPFVCEA</sequence>
<feature type="signal peptide" evidence="1">
    <location>
        <begin position="1"/>
        <end position="23"/>
    </location>
</feature>
<feature type="chain" id="PRO_5000057179" description="Snaclec coagulation factor IX/factor X-binding protein subunit A">
    <location>
        <begin position="24"/>
        <end position="152"/>
    </location>
</feature>
<feature type="domain" description="C-type lectin" evidence="2">
    <location>
        <begin position="32"/>
        <end position="151"/>
    </location>
</feature>
<feature type="binding site" evidence="1">
    <location>
        <position position="64"/>
    </location>
    <ligand>
        <name>Ca(2+)</name>
        <dbReference type="ChEBI" id="CHEBI:29108"/>
    </ligand>
</feature>
<feature type="binding site" evidence="1">
    <location>
        <position position="66"/>
    </location>
    <ligand>
        <name>Ca(2+)</name>
        <dbReference type="ChEBI" id="CHEBI:29108"/>
    </ligand>
</feature>
<feature type="binding site" evidence="1">
    <location>
        <position position="70"/>
    </location>
    <ligand>
        <name>Ca(2+)</name>
        <dbReference type="ChEBI" id="CHEBI:29108"/>
    </ligand>
</feature>
<feature type="binding site" evidence="1">
    <location>
        <position position="151"/>
    </location>
    <ligand>
        <name>Ca(2+)</name>
        <dbReference type="ChEBI" id="CHEBI:29108"/>
    </ligand>
</feature>
<feature type="disulfide bond" evidence="2">
    <location>
        <begin position="25"/>
        <end position="36"/>
    </location>
</feature>
<feature type="disulfide bond" evidence="2">
    <location>
        <begin position="53"/>
        <end position="150"/>
    </location>
</feature>
<feature type="disulfide bond" description="Interchain (with C-98 in subunit B)" evidence="2">
    <location>
        <position position="102"/>
    </location>
</feature>
<feature type="disulfide bond" evidence="2">
    <location>
        <begin position="125"/>
        <end position="142"/>
    </location>
</feature>
<protein>
    <recommendedName>
        <fullName>Snaclec coagulation factor IX/factor X-binding protein subunit A</fullName>
        <shortName>IX/X-bp subunit A</shortName>
    </recommendedName>
    <alternativeName>
        <fullName>Halyxin subunit A</fullName>
    </alternativeName>
</protein>
<reference key="1">
    <citation type="submission" date="1999-09" db="EMBL/GenBank/DDBJ databases">
        <title>A novel coagulation factor Xa inhibitor from Korean snake (Agkistrodon halys) venom.</title>
        <authorList>
            <person name="Koo B.H."/>
            <person name="Sohn Y.D."/>
            <person name="Kim D.S."/>
            <person name="Jang Y.S."/>
            <person name="Chung K.H."/>
        </authorList>
    </citation>
    <scope>NUCLEOTIDE SEQUENCE [MRNA]</scope>
    <source>
        <tissue>Venom gland</tissue>
    </source>
</reference>
<name>SLXA_GLOHA</name>
<proteinExistence type="evidence at transcript level"/>
<keyword id="KW-1203">Blood coagulation cascade inhibiting toxin</keyword>
<keyword id="KW-0106">Calcium</keyword>
<keyword id="KW-1015">Disulfide bond</keyword>
<keyword id="KW-1199">Hemostasis impairing toxin</keyword>
<keyword id="KW-0479">Metal-binding</keyword>
<keyword id="KW-0964">Secreted</keyword>
<keyword id="KW-0732">Signal</keyword>
<keyword id="KW-0800">Toxin</keyword>
<organism>
    <name type="scientific">Gloydius halys</name>
    <name type="common">Chinese water mocassin</name>
    <name type="synonym">Agkistrodon halys</name>
    <dbReference type="NCBI Taxonomy" id="8714"/>
    <lineage>
        <taxon>Eukaryota</taxon>
        <taxon>Metazoa</taxon>
        <taxon>Chordata</taxon>
        <taxon>Craniata</taxon>
        <taxon>Vertebrata</taxon>
        <taxon>Euteleostomi</taxon>
        <taxon>Lepidosauria</taxon>
        <taxon>Squamata</taxon>
        <taxon>Bifurcata</taxon>
        <taxon>Unidentata</taxon>
        <taxon>Episquamata</taxon>
        <taxon>Toxicofera</taxon>
        <taxon>Serpentes</taxon>
        <taxon>Colubroidea</taxon>
        <taxon>Viperidae</taxon>
        <taxon>Crotalinae</taxon>
        <taxon>Gloydius</taxon>
    </lineage>
</organism>
<dbReference type="EMBL" id="AF190827">
    <property type="protein sequence ID" value="AAG17178.1"/>
    <property type="molecule type" value="mRNA"/>
</dbReference>
<dbReference type="SMR" id="Q9DG39"/>
<dbReference type="GO" id="GO:0005576">
    <property type="term" value="C:extracellular region"/>
    <property type="evidence" value="ECO:0007669"/>
    <property type="project" value="UniProtKB-SubCell"/>
</dbReference>
<dbReference type="GO" id="GO:0046872">
    <property type="term" value="F:metal ion binding"/>
    <property type="evidence" value="ECO:0007669"/>
    <property type="project" value="UniProtKB-KW"/>
</dbReference>
<dbReference type="GO" id="GO:0090729">
    <property type="term" value="F:toxin activity"/>
    <property type="evidence" value="ECO:0007669"/>
    <property type="project" value="UniProtKB-KW"/>
</dbReference>
<dbReference type="FunFam" id="3.10.100.10:FF:000087">
    <property type="entry name" value="Snaclec rhodocetin subunit delta"/>
    <property type="match status" value="1"/>
</dbReference>
<dbReference type="Gene3D" id="3.10.100.10">
    <property type="entry name" value="Mannose-Binding Protein A, subunit A"/>
    <property type="match status" value="1"/>
</dbReference>
<dbReference type="InterPro" id="IPR001304">
    <property type="entry name" value="C-type_lectin-like"/>
</dbReference>
<dbReference type="InterPro" id="IPR016186">
    <property type="entry name" value="C-type_lectin-like/link_sf"/>
</dbReference>
<dbReference type="InterPro" id="IPR050111">
    <property type="entry name" value="C-type_lectin/snaclec_domain"/>
</dbReference>
<dbReference type="InterPro" id="IPR018378">
    <property type="entry name" value="C-type_lectin_CS"/>
</dbReference>
<dbReference type="InterPro" id="IPR016187">
    <property type="entry name" value="CTDL_fold"/>
</dbReference>
<dbReference type="PANTHER" id="PTHR22803">
    <property type="entry name" value="MANNOSE, PHOSPHOLIPASE, LECTIN RECEPTOR RELATED"/>
    <property type="match status" value="1"/>
</dbReference>
<dbReference type="Pfam" id="PF00059">
    <property type="entry name" value="Lectin_C"/>
    <property type="match status" value="1"/>
</dbReference>
<dbReference type="PRINTS" id="PR01504">
    <property type="entry name" value="PNCREATITSAP"/>
</dbReference>
<dbReference type="SMART" id="SM00034">
    <property type="entry name" value="CLECT"/>
    <property type="match status" value="1"/>
</dbReference>
<dbReference type="SUPFAM" id="SSF56436">
    <property type="entry name" value="C-type lectin-like"/>
    <property type="match status" value="1"/>
</dbReference>
<dbReference type="PROSITE" id="PS00615">
    <property type="entry name" value="C_TYPE_LECTIN_1"/>
    <property type="match status" value="1"/>
</dbReference>
<dbReference type="PROSITE" id="PS50041">
    <property type="entry name" value="C_TYPE_LECTIN_2"/>
    <property type="match status" value="1"/>
</dbReference>
<accession>Q9DG39</accession>
<comment type="function">
    <text evidence="1">Anticoagulant protein which binds to the gamma-carboxyglutamic acid-domain regions of factors IX (F9) and factor X (F10) in the presence of calcium with a 1 to 1 stoichiometry.</text>
</comment>
<comment type="subunit">
    <text evidence="1">Heterodimer of subunits A and B; disulfide-linked.</text>
</comment>
<comment type="subcellular location">
    <subcellularLocation>
        <location evidence="1">Secreted</location>
    </subcellularLocation>
</comment>
<comment type="tissue specificity">
    <text>Expressed by the venom gland.</text>
</comment>
<comment type="miscellaneous">
    <text evidence="1">Calcium is required for ligand binding.</text>
</comment>
<comment type="similarity">
    <text evidence="3">Belongs to the snaclec family.</text>
</comment>